<feature type="chain" id="PRO_1000149401" description="3-isopropylmalate dehydratase small subunit">
    <location>
        <begin position="1"/>
        <end position="193"/>
    </location>
</feature>
<reference key="1">
    <citation type="submission" date="2009-02" db="EMBL/GenBank/DDBJ databases">
        <title>Genome sequence of Bacillus cereus 03BB102.</title>
        <authorList>
            <person name="Dodson R.J."/>
            <person name="Jackson P."/>
            <person name="Munk A.C."/>
            <person name="Brettin T."/>
            <person name="Bruce D."/>
            <person name="Detter C."/>
            <person name="Tapia R."/>
            <person name="Han C."/>
            <person name="Sutton G."/>
            <person name="Sims D."/>
        </authorList>
    </citation>
    <scope>NUCLEOTIDE SEQUENCE [LARGE SCALE GENOMIC DNA]</scope>
    <source>
        <strain>03BB102</strain>
    </source>
</reference>
<dbReference type="EC" id="4.2.1.33" evidence="1"/>
<dbReference type="EMBL" id="CP001407">
    <property type="protein sequence ID" value="ACO26399.1"/>
    <property type="molecule type" value="Genomic_DNA"/>
</dbReference>
<dbReference type="RefSeq" id="WP_000433180.1">
    <property type="nucleotide sequence ID" value="NZ_CP009318.1"/>
</dbReference>
<dbReference type="SMR" id="C1EMB2"/>
<dbReference type="KEGG" id="bcx:BCA_1458"/>
<dbReference type="PATRIC" id="fig|572264.18.peg.1408"/>
<dbReference type="UniPathway" id="UPA00048">
    <property type="reaction ID" value="UER00071"/>
</dbReference>
<dbReference type="Proteomes" id="UP000002210">
    <property type="component" value="Chromosome"/>
</dbReference>
<dbReference type="GO" id="GO:0009316">
    <property type="term" value="C:3-isopropylmalate dehydratase complex"/>
    <property type="evidence" value="ECO:0007669"/>
    <property type="project" value="InterPro"/>
</dbReference>
<dbReference type="GO" id="GO:0003861">
    <property type="term" value="F:3-isopropylmalate dehydratase activity"/>
    <property type="evidence" value="ECO:0007669"/>
    <property type="project" value="UniProtKB-UniRule"/>
</dbReference>
<dbReference type="GO" id="GO:0009098">
    <property type="term" value="P:L-leucine biosynthetic process"/>
    <property type="evidence" value="ECO:0007669"/>
    <property type="project" value="UniProtKB-UniRule"/>
</dbReference>
<dbReference type="CDD" id="cd01577">
    <property type="entry name" value="IPMI_Swivel"/>
    <property type="match status" value="1"/>
</dbReference>
<dbReference type="FunFam" id="3.20.19.10:FF:000003">
    <property type="entry name" value="3-isopropylmalate dehydratase small subunit"/>
    <property type="match status" value="1"/>
</dbReference>
<dbReference type="Gene3D" id="3.20.19.10">
    <property type="entry name" value="Aconitase, domain 4"/>
    <property type="match status" value="1"/>
</dbReference>
<dbReference type="HAMAP" id="MF_01031">
    <property type="entry name" value="LeuD_type1"/>
    <property type="match status" value="1"/>
</dbReference>
<dbReference type="InterPro" id="IPR004431">
    <property type="entry name" value="3-IsopropMal_deHydase_ssu"/>
</dbReference>
<dbReference type="InterPro" id="IPR015928">
    <property type="entry name" value="Aconitase/3IPM_dehydase_swvl"/>
</dbReference>
<dbReference type="InterPro" id="IPR000573">
    <property type="entry name" value="AconitaseA/IPMdHydase_ssu_swvl"/>
</dbReference>
<dbReference type="InterPro" id="IPR033940">
    <property type="entry name" value="IPMI_Swivel"/>
</dbReference>
<dbReference type="InterPro" id="IPR050075">
    <property type="entry name" value="LeuD"/>
</dbReference>
<dbReference type="NCBIfam" id="TIGR00171">
    <property type="entry name" value="leuD"/>
    <property type="match status" value="1"/>
</dbReference>
<dbReference type="NCBIfam" id="NF002458">
    <property type="entry name" value="PRK01641.1"/>
    <property type="match status" value="1"/>
</dbReference>
<dbReference type="PANTHER" id="PTHR43345:SF5">
    <property type="entry name" value="3-ISOPROPYLMALATE DEHYDRATASE SMALL SUBUNIT"/>
    <property type="match status" value="1"/>
</dbReference>
<dbReference type="PANTHER" id="PTHR43345">
    <property type="entry name" value="3-ISOPROPYLMALATE DEHYDRATASE SMALL SUBUNIT 2-RELATED-RELATED"/>
    <property type="match status" value="1"/>
</dbReference>
<dbReference type="Pfam" id="PF00694">
    <property type="entry name" value="Aconitase_C"/>
    <property type="match status" value="1"/>
</dbReference>
<dbReference type="SUPFAM" id="SSF52016">
    <property type="entry name" value="LeuD/IlvD-like"/>
    <property type="match status" value="1"/>
</dbReference>
<protein>
    <recommendedName>
        <fullName evidence="1">3-isopropylmalate dehydratase small subunit</fullName>
        <ecNumber evidence="1">4.2.1.33</ecNumber>
    </recommendedName>
    <alternativeName>
        <fullName evidence="1">Alpha-IPM isomerase</fullName>
        <shortName evidence="1">IPMI</shortName>
    </alternativeName>
    <alternativeName>
        <fullName evidence="1">Isopropylmalate isomerase</fullName>
    </alternativeName>
</protein>
<comment type="function">
    <text evidence="1">Catalyzes the isomerization between 2-isopropylmalate and 3-isopropylmalate, via the formation of 2-isopropylmaleate.</text>
</comment>
<comment type="catalytic activity">
    <reaction evidence="1">
        <text>(2R,3S)-3-isopropylmalate = (2S)-2-isopropylmalate</text>
        <dbReference type="Rhea" id="RHEA:32287"/>
        <dbReference type="ChEBI" id="CHEBI:1178"/>
        <dbReference type="ChEBI" id="CHEBI:35121"/>
        <dbReference type="EC" id="4.2.1.33"/>
    </reaction>
</comment>
<comment type="pathway">
    <text evidence="1">Amino-acid biosynthesis; L-leucine biosynthesis; L-leucine from 3-methyl-2-oxobutanoate: step 2/4.</text>
</comment>
<comment type="subunit">
    <text evidence="1">Heterodimer of LeuC and LeuD.</text>
</comment>
<comment type="similarity">
    <text evidence="1">Belongs to the LeuD family. LeuD type 1 subfamily.</text>
</comment>
<name>LEUD_BACC3</name>
<gene>
    <name evidence="1" type="primary">leuD</name>
    <name type="ordered locus">BCA_1458</name>
</gene>
<evidence type="ECO:0000255" key="1">
    <source>
        <dbReference type="HAMAP-Rule" id="MF_01031"/>
    </source>
</evidence>
<sequence length="193" mass="22632">MEPFRIHKGTAAVLMNDNIDTDQIIPKQYLKRIERTGFGKFLFDEWRYDNNRQENPNFPLNAPDRKGASILITGDNFGCGSSREHAPWALADYGFRVIIAGGFADIFYMNCMKNGMLPIVMDKEMREKLVKTDAREQIEVDLENEVITTSTHRFHFTIEKMWKEKLFNGLDEISITMQYEQEIKEYERRVATY</sequence>
<organism>
    <name type="scientific">Bacillus cereus (strain 03BB102)</name>
    <dbReference type="NCBI Taxonomy" id="572264"/>
    <lineage>
        <taxon>Bacteria</taxon>
        <taxon>Bacillati</taxon>
        <taxon>Bacillota</taxon>
        <taxon>Bacilli</taxon>
        <taxon>Bacillales</taxon>
        <taxon>Bacillaceae</taxon>
        <taxon>Bacillus</taxon>
        <taxon>Bacillus cereus group</taxon>
    </lineage>
</organism>
<proteinExistence type="inferred from homology"/>
<keyword id="KW-0028">Amino-acid biosynthesis</keyword>
<keyword id="KW-0100">Branched-chain amino acid biosynthesis</keyword>
<keyword id="KW-0432">Leucine biosynthesis</keyword>
<keyword id="KW-0456">Lyase</keyword>
<accession>C1EMB2</accession>